<proteinExistence type="inferred from homology"/>
<accession>Q8DF90</accession>
<protein>
    <recommendedName>
        <fullName evidence="1">Xanthine-guanine phosphoribosyltransferase</fullName>
        <shortName evidence="1">XGPRT</shortName>
        <ecNumber evidence="1">2.4.2.-</ecNumber>
        <ecNumber evidence="1">2.4.2.22</ecNumber>
    </recommendedName>
    <alternativeName>
        <fullName evidence="1">Xanthine phosphoribosyltransferase</fullName>
    </alternativeName>
</protein>
<dbReference type="EC" id="2.4.2.-" evidence="1"/>
<dbReference type="EC" id="2.4.2.22" evidence="1"/>
<dbReference type="EMBL" id="AE016795">
    <property type="protein sequence ID" value="AAO08858.1"/>
    <property type="molecule type" value="Genomic_DNA"/>
</dbReference>
<dbReference type="SMR" id="Q8DF90"/>
<dbReference type="KEGG" id="vvu:VV1_0329"/>
<dbReference type="HOGENOM" id="CLU_080904_3_0_6"/>
<dbReference type="UniPathway" id="UPA00602">
    <property type="reaction ID" value="UER00658"/>
</dbReference>
<dbReference type="UniPathway" id="UPA00909">
    <property type="reaction ID" value="UER00887"/>
</dbReference>
<dbReference type="Proteomes" id="UP000002275">
    <property type="component" value="Chromosome 1"/>
</dbReference>
<dbReference type="GO" id="GO:0005829">
    <property type="term" value="C:cytosol"/>
    <property type="evidence" value="ECO:0007669"/>
    <property type="project" value="TreeGrafter"/>
</dbReference>
<dbReference type="GO" id="GO:0005886">
    <property type="term" value="C:plasma membrane"/>
    <property type="evidence" value="ECO:0007669"/>
    <property type="project" value="UniProtKB-SubCell"/>
</dbReference>
<dbReference type="GO" id="GO:0052657">
    <property type="term" value="F:guanine phosphoribosyltransferase activity"/>
    <property type="evidence" value="ECO:0007669"/>
    <property type="project" value="RHEA"/>
</dbReference>
<dbReference type="GO" id="GO:0004422">
    <property type="term" value="F:hypoxanthine phosphoribosyltransferase activity"/>
    <property type="evidence" value="ECO:0007669"/>
    <property type="project" value="TreeGrafter"/>
</dbReference>
<dbReference type="GO" id="GO:0000287">
    <property type="term" value="F:magnesium ion binding"/>
    <property type="evidence" value="ECO:0007669"/>
    <property type="project" value="UniProtKB-UniRule"/>
</dbReference>
<dbReference type="GO" id="GO:0000310">
    <property type="term" value="F:xanthine phosphoribosyltransferase activity"/>
    <property type="evidence" value="ECO:0007669"/>
    <property type="project" value="UniProtKB-UniRule"/>
</dbReference>
<dbReference type="GO" id="GO:0032263">
    <property type="term" value="P:GMP salvage"/>
    <property type="evidence" value="ECO:0007669"/>
    <property type="project" value="UniProtKB-UniRule"/>
</dbReference>
<dbReference type="GO" id="GO:0032264">
    <property type="term" value="P:IMP salvage"/>
    <property type="evidence" value="ECO:0007669"/>
    <property type="project" value="TreeGrafter"/>
</dbReference>
<dbReference type="GO" id="GO:0006166">
    <property type="term" value="P:purine ribonucleoside salvage"/>
    <property type="evidence" value="ECO:0007669"/>
    <property type="project" value="UniProtKB-KW"/>
</dbReference>
<dbReference type="GO" id="GO:0032265">
    <property type="term" value="P:XMP salvage"/>
    <property type="evidence" value="ECO:0007669"/>
    <property type="project" value="UniProtKB-UniRule"/>
</dbReference>
<dbReference type="CDD" id="cd06223">
    <property type="entry name" value="PRTases_typeI"/>
    <property type="match status" value="1"/>
</dbReference>
<dbReference type="Gene3D" id="3.40.50.2020">
    <property type="match status" value="1"/>
</dbReference>
<dbReference type="HAMAP" id="MF_01903">
    <property type="entry name" value="XGPRT"/>
    <property type="match status" value="1"/>
</dbReference>
<dbReference type="InterPro" id="IPR000836">
    <property type="entry name" value="PRibTrfase_dom"/>
</dbReference>
<dbReference type="InterPro" id="IPR029057">
    <property type="entry name" value="PRTase-like"/>
</dbReference>
<dbReference type="InterPro" id="IPR023747">
    <property type="entry name" value="Xanthine_Guanine_PRibTrfase"/>
</dbReference>
<dbReference type="NCBIfam" id="NF006613">
    <property type="entry name" value="PRK09177.1"/>
    <property type="match status" value="1"/>
</dbReference>
<dbReference type="NCBIfam" id="NF000014">
    <property type="entry name" value="tet_prtrans_34"/>
    <property type="match status" value="1"/>
</dbReference>
<dbReference type="PANTHER" id="PTHR39563">
    <property type="entry name" value="XANTHINE PHOSPHORIBOSYLTRANSFERASE"/>
    <property type="match status" value="1"/>
</dbReference>
<dbReference type="PANTHER" id="PTHR39563:SF1">
    <property type="entry name" value="XANTHINE-GUANINE PHOSPHORIBOSYLTRANSFERASE"/>
    <property type="match status" value="1"/>
</dbReference>
<dbReference type="Pfam" id="PF00156">
    <property type="entry name" value="Pribosyltran"/>
    <property type="match status" value="1"/>
</dbReference>
<dbReference type="SUPFAM" id="SSF53271">
    <property type="entry name" value="PRTase-like"/>
    <property type="match status" value="1"/>
</dbReference>
<dbReference type="PROSITE" id="PS00103">
    <property type="entry name" value="PUR_PYR_PR_TRANSFER"/>
    <property type="match status" value="1"/>
</dbReference>
<evidence type="ECO:0000255" key="1">
    <source>
        <dbReference type="HAMAP-Rule" id="MF_01903"/>
    </source>
</evidence>
<name>XGPT_VIBVU</name>
<gene>
    <name evidence="1" type="primary">gpt</name>
    <name type="ordered locus">VV1_0329</name>
</gene>
<sequence>MSNKFVITWDAMQTYCRQLAEKQMPADQWKGIWAVSRGGLVPGAILARELGIRYVDTICISSYDHDHQRDMTVLKAPEGDGEGYLIVEDLVDSGDTARKLREMYPKAKLIAVCAKPSGKELLDDYVVDIAQDTWIEQPWDMALAYAEPVNRKQK</sequence>
<comment type="function">
    <text evidence="1">Purine salvage pathway enzyme that catalyzes the transfer of the ribosyl-5-phosphate group from 5-phospho-alpha-D-ribose 1-diphosphate (PRPP) to the N9 position of the 6-oxopurines guanine and xanthine to form the corresponding ribonucleotides GMP (guanosine 5'-monophosphate) and XMP (xanthosine 5'-monophosphate), with the release of PPi. To a lesser extent, also acts on hypoxanthine.</text>
</comment>
<comment type="catalytic activity">
    <reaction evidence="1">
        <text>GMP + diphosphate = guanine + 5-phospho-alpha-D-ribose 1-diphosphate</text>
        <dbReference type="Rhea" id="RHEA:25424"/>
        <dbReference type="ChEBI" id="CHEBI:16235"/>
        <dbReference type="ChEBI" id="CHEBI:33019"/>
        <dbReference type="ChEBI" id="CHEBI:58017"/>
        <dbReference type="ChEBI" id="CHEBI:58115"/>
    </reaction>
    <physiologicalReaction direction="right-to-left" evidence="1">
        <dbReference type="Rhea" id="RHEA:25426"/>
    </physiologicalReaction>
</comment>
<comment type="catalytic activity">
    <reaction evidence="1">
        <text>XMP + diphosphate = xanthine + 5-phospho-alpha-D-ribose 1-diphosphate</text>
        <dbReference type="Rhea" id="RHEA:10800"/>
        <dbReference type="ChEBI" id="CHEBI:17712"/>
        <dbReference type="ChEBI" id="CHEBI:33019"/>
        <dbReference type="ChEBI" id="CHEBI:57464"/>
        <dbReference type="ChEBI" id="CHEBI:58017"/>
        <dbReference type="EC" id="2.4.2.22"/>
    </reaction>
    <physiologicalReaction direction="right-to-left" evidence="1">
        <dbReference type="Rhea" id="RHEA:10802"/>
    </physiologicalReaction>
</comment>
<comment type="catalytic activity">
    <reaction evidence="1">
        <text>IMP + diphosphate = hypoxanthine + 5-phospho-alpha-D-ribose 1-diphosphate</text>
        <dbReference type="Rhea" id="RHEA:17973"/>
        <dbReference type="ChEBI" id="CHEBI:17368"/>
        <dbReference type="ChEBI" id="CHEBI:33019"/>
        <dbReference type="ChEBI" id="CHEBI:58017"/>
        <dbReference type="ChEBI" id="CHEBI:58053"/>
    </reaction>
    <physiologicalReaction direction="right-to-left" evidence="1">
        <dbReference type="Rhea" id="RHEA:17975"/>
    </physiologicalReaction>
</comment>
<comment type="cofactor">
    <cofactor evidence="1">
        <name>Mg(2+)</name>
        <dbReference type="ChEBI" id="CHEBI:18420"/>
    </cofactor>
</comment>
<comment type="pathway">
    <text evidence="1">Purine metabolism; GMP biosynthesis via salvage pathway; GMP from guanine: step 1/1.</text>
</comment>
<comment type="pathway">
    <text evidence="1">Purine metabolism; XMP biosynthesis via salvage pathway; XMP from xanthine: step 1/1.</text>
</comment>
<comment type="subunit">
    <text evidence="1">Homotetramer.</text>
</comment>
<comment type="subcellular location">
    <subcellularLocation>
        <location evidence="1">Cell inner membrane</location>
        <topology evidence="1">Peripheral membrane protein</topology>
    </subcellularLocation>
</comment>
<comment type="similarity">
    <text evidence="1">Belongs to the purine/pyrimidine phosphoribosyltransferase family. XGPT subfamily.</text>
</comment>
<reference key="1">
    <citation type="submission" date="2002-12" db="EMBL/GenBank/DDBJ databases">
        <title>Complete genome sequence of Vibrio vulnificus CMCP6.</title>
        <authorList>
            <person name="Rhee J.H."/>
            <person name="Kim S.Y."/>
            <person name="Chung S.S."/>
            <person name="Kim J.J."/>
            <person name="Moon Y.H."/>
            <person name="Jeong H."/>
            <person name="Choy H.E."/>
        </authorList>
    </citation>
    <scope>NUCLEOTIDE SEQUENCE [LARGE SCALE GENOMIC DNA]</scope>
    <source>
        <strain>CMCP6</strain>
    </source>
</reference>
<feature type="chain" id="PRO_0000139693" description="Xanthine-guanine phosphoribosyltransferase">
    <location>
        <begin position="1"/>
        <end position="154"/>
    </location>
</feature>
<feature type="binding site" evidence="1">
    <location>
        <begin position="37"/>
        <end position="38"/>
    </location>
    <ligand>
        <name>5-phospho-alpha-D-ribose 1-diphosphate</name>
        <dbReference type="ChEBI" id="CHEBI:58017"/>
    </ligand>
</feature>
<feature type="binding site" evidence="1">
    <location>
        <position position="69"/>
    </location>
    <ligand>
        <name>5-phospho-alpha-D-ribose 1-diphosphate</name>
        <dbReference type="ChEBI" id="CHEBI:58017"/>
    </ligand>
</feature>
<feature type="binding site" evidence="1">
    <location>
        <position position="69"/>
    </location>
    <ligand>
        <name>GMP</name>
        <dbReference type="ChEBI" id="CHEBI:58115"/>
    </ligand>
</feature>
<feature type="binding site" evidence="1">
    <location>
        <begin position="88"/>
        <end position="96"/>
    </location>
    <ligand>
        <name>5-phospho-alpha-D-ribose 1-diphosphate</name>
        <dbReference type="ChEBI" id="CHEBI:58017"/>
    </ligand>
</feature>
<feature type="binding site" evidence="1">
    <location>
        <position position="89"/>
    </location>
    <ligand>
        <name>Mg(2+)</name>
        <dbReference type="ChEBI" id="CHEBI:18420"/>
    </ligand>
</feature>
<feature type="binding site" evidence="1">
    <location>
        <begin position="92"/>
        <end position="96"/>
    </location>
    <ligand>
        <name>GMP</name>
        <dbReference type="ChEBI" id="CHEBI:58115"/>
    </ligand>
</feature>
<feature type="binding site" evidence="1">
    <location>
        <position position="92"/>
    </location>
    <ligand>
        <name>guanine</name>
        <dbReference type="ChEBI" id="CHEBI:16235"/>
    </ligand>
</feature>
<feature type="binding site" evidence="1">
    <location>
        <position position="92"/>
    </location>
    <ligand>
        <name>xanthine</name>
        <dbReference type="ChEBI" id="CHEBI:17712"/>
    </ligand>
</feature>
<feature type="binding site" evidence="1">
    <location>
        <begin position="134"/>
        <end position="135"/>
    </location>
    <ligand>
        <name>GMP</name>
        <dbReference type="ChEBI" id="CHEBI:58115"/>
    </ligand>
</feature>
<feature type="binding site" evidence="1">
    <location>
        <position position="135"/>
    </location>
    <ligand>
        <name>guanine</name>
        <dbReference type="ChEBI" id="CHEBI:16235"/>
    </ligand>
</feature>
<feature type="binding site" evidence="1">
    <location>
        <position position="135"/>
    </location>
    <ligand>
        <name>xanthine</name>
        <dbReference type="ChEBI" id="CHEBI:17712"/>
    </ligand>
</feature>
<organism>
    <name type="scientific">Vibrio vulnificus (strain CMCP6)</name>
    <dbReference type="NCBI Taxonomy" id="216895"/>
    <lineage>
        <taxon>Bacteria</taxon>
        <taxon>Pseudomonadati</taxon>
        <taxon>Pseudomonadota</taxon>
        <taxon>Gammaproteobacteria</taxon>
        <taxon>Vibrionales</taxon>
        <taxon>Vibrionaceae</taxon>
        <taxon>Vibrio</taxon>
    </lineage>
</organism>
<keyword id="KW-0997">Cell inner membrane</keyword>
<keyword id="KW-1003">Cell membrane</keyword>
<keyword id="KW-0328">Glycosyltransferase</keyword>
<keyword id="KW-0460">Magnesium</keyword>
<keyword id="KW-0472">Membrane</keyword>
<keyword id="KW-0479">Metal-binding</keyword>
<keyword id="KW-0660">Purine salvage</keyword>
<keyword id="KW-0808">Transferase</keyword>